<gene>
    <name evidence="1" type="primary">pnp</name>
    <name type="ordered locus">CJJ81176_1269</name>
</gene>
<reference key="1">
    <citation type="submission" date="2006-12" db="EMBL/GenBank/DDBJ databases">
        <authorList>
            <person name="Fouts D.E."/>
            <person name="Nelson K.E."/>
            <person name="Sebastian Y."/>
        </authorList>
    </citation>
    <scope>NUCLEOTIDE SEQUENCE [LARGE SCALE GENOMIC DNA]</scope>
    <source>
        <strain>81-176</strain>
    </source>
</reference>
<proteinExistence type="inferred from homology"/>
<feature type="chain" id="PRO_0000329574" description="Polyribonucleotide nucleotidyltransferase">
    <location>
        <begin position="1"/>
        <end position="719"/>
    </location>
</feature>
<feature type="domain" description="KH" evidence="1">
    <location>
        <begin position="573"/>
        <end position="633"/>
    </location>
</feature>
<feature type="domain" description="S1 motif" evidence="1">
    <location>
        <begin position="658"/>
        <end position="719"/>
    </location>
</feature>
<feature type="binding site" evidence="1">
    <location>
        <position position="507"/>
    </location>
    <ligand>
        <name>Mg(2+)</name>
        <dbReference type="ChEBI" id="CHEBI:18420"/>
    </ligand>
</feature>
<feature type="binding site" evidence="1">
    <location>
        <position position="513"/>
    </location>
    <ligand>
        <name>Mg(2+)</name>
        <dbReference type="ChEBI" id="CHEBI:18420"/>
    </ligand>
</feature>
<comment type="function">
    <text evidence="1">Involved in mRNA degradation. Catalyzes the phosphorolysis of single-stranded polyribonucleotides processively in the 3'- to 5'-direction.</text>
</comment>
<comment type="catalytic activity">
    <reaction evidence="1">
        <text>RNA(n+1) + phosphate = RNA(n) + a ribonucleoside 5'-diphosphate</text>
        <dbReference type="Rhea" id="RHEA:22096"/>
        <dbReference type="Rhea" id="RHEA-COMP:14527"/>
        <dbReference type="Rhea" id="RHEA-COMP:17342"/>
        <dbReference type="ChEBI" id="CHEBI:43474"/>
        <dbReference type="ChEBI" id="CHEBI:57930"/>
        <dbReference type="ChEBI" id="CHEBI:140395"/>
        <dbReference type="EC" id="2.7.7.8"/>
    </reaction>
</comment>
<comment type="cofactor">
    <cofactor evidence="1">
        <name>Mg(2+)</name>
        <dbReference type="ChEBI" id="CHEBI:18420"/>
    </cofactor>
</comment>
<comment type="subcellular location">
    <subcellularLocation>
        <location evidence="1">Cytoplasm</location>
    </subcellularLocation>
</comment>
<comment type="similarity">
    <text evidence="1">Belongs to the polyribonucleotide nucleotidyltransferase family.</text>
</comment>
<name>PNP_CAMJJ</name>
<protein>
    <recommendedName>
        <fullName evidence="1">Polyribonucleotide nucleotidyltransferase</fullName>
        <ecNumber evidence="1">2.7.7.8</ecNumber>
    </recommendedName>
    <alternativeName>
        <fullName evidence="1">Polynucleotide phosphorylase</fullName>
        <shortName evidence="1">PNPase</shortName>
    </alternativeName>
</protein>
<organism>
    <name type="scientific">Campylobacter jejuni subsp. jejuni serotype O:23/36 (strain 81-176)</name>
    <dbReference type="NCBI Taxonomy" id="354242"/>
    <lineage>
        <taxon>Bacteria</taxon>
        <taxon>Pseudomonadati</taxon>
        <taxon>Campylobacterota</taxon>
        <taxon>Epsilonproteobacteria</taxon>
        <taxon>Campylobacterales</taxon>
        <taxon>Campylobacteraceae</taxon>
        <taxon>Campylobacter</taxon>
    </lineage>
</organism>
<keyword id="KW-0963">Cytoplasm</keyword>
<keyword id="KW-0460">Magnesium</keyword>
<keyword id="KW-0479">Metal-binding</keyword>
<keyword id="KW-0548">Nucleotidyltransferase</keyword>
<keyword id="KW-0694">RNA-binding</keyword>
<keyword id="KW-0808">Transferase</keyword>
<accession>A1W0N8</accession>
<sequence length="719" mass="79123">MQYSIEINKNTEIFDIDKVAKQAAGAVLMRQGKSIVLATVAREEKQVEEDFLPLTVQYIEKAYAAGKIPGGYVKRETKPSDAETLTARIIDRSLRPLFPKGYAYPTQIVVMVLSADPKVDLQVMSLNAASVALYLSDIPMKAPVCGVRIGKIDGNFILNPNNEELQNSTLDLYVAGVKDELLMIEMRALPDQKENEIFIEAPYADVLTQTTSQNMNELSEDEILEALNLAQKAILNGSNAYEEAFSKHKKNSQIELKNEIEHPEILAFIENNFQKQIKEAINQMAKSERASELNKIAKEILNLEITKDWSEESVLNTLAKVKRKLIREQILNEGKRADGRSLNEVRPISIETNILPNAHGSCLFTRGQTQALVVATLGGENDAQMIDLLTEKNPISERFMVNYNFPGFSVGEASPIKAPGRRELGHGNLAKRALYPSVDENYPYIIRLVSEILESNGSSSMATVCGGSLALKAAGVPSLKLVAGVAMGLIFEDNKHAVLTDIMGLEDHDGDMDFKVAGSKDGVTALQMDIKLGGIDQETLKQALYQAKEGRIHILNIMEEAAKEIIVNEEVLPKLELFSVDPSKIVDIIGQAGKTIKEIIEKFGVSIDLDREKGEVKIAGSQNEQIKAAKDYIINITSSQKGTKKGSKDKDISGFELGQEFQGIVKKIAPFGAFVELKNGVDGLLHSSKSKHLNLSENQSLKVKISEIKNGKISVDLCE</sequence>
<dbReference type="EC" id="2.7.7.8" evidence="1"/>
<dbReference type="EMBL" id="CP000538">
    <property type="protein sequence ID" value="EAQ72892.1"/>
    <property type="molecule type" value="Genomic_DNA"/>
</dbReference>
<dbReference type="RefSeq" id="WP_002869081.1">
    <property type="nucleotide sequence ID" value="NC_008787.1"/>
</dbReference>
<dbReference type="SMR" id="A1W0N8"/>
<dbReference type="KEGG" id="cjj:CJJ81176_1269"/>
<dbReference type="eggNOG" id="COG1185">
    <property type="taxonomic scope" value="Bacteria"/>
</dbReference>
<dbReference type="HOGENOM" id="CLU_004217_2_2_7"/>
<dbReference type="Proteomes" id="UP000000646">
    <property type="component" value="Chromosome"/>
</dbReference>
<dbReference type="GO" id="GO:0005829">
    <property type="term" value="C:cytosol"/>
    <property type="evidence" value="ECO:0007669"/>
    <property type="project" value="TreeGrafter"/>
</dbReference>
<dbReference type="GO" id="GO:0000175">
    <property type="term" value="F:3'-5'-RNA exonuclease activity"/>
    <property type="evidence" value="ECO:0007669"/>
    <property type="project" value="TreeGrafter"/>
</dbReference>
<dbReference type="GO" id="GO:0000287">
    <property type="term" value="F:magnesium ion binding"/>
    <property type="evidence" value="ECO:0007669"/>
    <property type="project" value="UniProtKB-UniRule"/>
</dbReference>
<dbReference type="GO" id="GO:0004654">
    <property type="term" value="F:polyribonucleotide nucleotidyltransferase activity"/>
    <property type="evidence" value="ECO:0007669"/>
    <property type="project" value="UniProtKB-UniRule"/>
</dbReference>
<dbReference type="GO" id="GO:0003723">
    <property type="term" value="F:RNA binding"/>
    <property type="evidence" value="ECO:0007669"/>
    <property type="project" value="UniProtKB-UniRule"/>
</dbReference>
<dbReference type="GO" id="GO:0006402">
    <property type="term" value="P:mRNA catabolic process"/>
    <property type="evidence" value="ECO:0007669"/>
    <property type="project" value="UniProtKB-UniRule"/>
</dbReference>
<dbReference type="GO" id="GO:0006396">
    <property type="term" value="P:RNA processing"/>
    <property type="evidence" value="ECO:0007669"/>
    <property type="project" value="InterPro"/>
</dbReference>
<dbReference type="CDD" id="cd02393">
    <property type="entry name" value="KH-I_PNPase"/>
    <property type="match status" value="1"/>
</dbReference>
<dbReference type="CDD" id="cd11364">
    <property type="entry name" value="RNase_PH_PNPase_2"/>
    <property type="match status" value="1"/>
</dbReference>
<dbReference type="FunFam" id="3.30.1370.10:FF:000001">
    <property type="entry name" value="Polyribonucleotide nucleotidyltransferase"/>
    <property type="match status" value="1"/>
</dbReference>
<dbReference type="FunFam" id="3.30.230.70:FF:000026">
    <property type="entry name" value="Polyribonucleotide nucleotidyltransferase"/>
    <property type="match status" value="1"/>
</dbReference>
<dbReference type="FunFam" id="3.30.230.70:FF:000029">
    <property type="entry name" value="Polyribonucleotide nucleotidyltransferase"/>
    <property type="match status" value="1"/>
</dbReference>
<dbReference type="Gene3D" id="3.30.230.70">
    <property type="entry name" value="GHMP Kinase, N-terminal domain"/>
    <property type="match status" value="2"/>
</dbReference>
<dbReference type="Gene3D" id="3.30.1370.10">
    <property type="entry name" value="K Homology domain, type 1"/>
    <property type="match status" value="1"/>
</dbReference>
<dbReference type="Gene3D" id="2.40.50.140">
    <property type="entry name" value="Nucleic acid-binding proteins"/>
    <property type="match status" value="1"/>
</dbReference>
<dbReference type="HAMAP" id="MF_01595">
    <property type="entry name" value="PNPase"/>
    <property type="match status" value="1"/>
</dbReference>
<dbReference type="InterPro" id="IPR001247">
    <property type="entry name" value="ExoRNase_PH_dom1"/>
</dbReference>
<dbReference type="InterPro" id="IPR015847">
    <property type="entry name" value="ExoRNase_PH_dom2"/>
</dbReference>
<dbReference type="InterPro" id="IPR036345">
    <property type="entry name" value="ExoRNase_PH_dom2_sf"/>
</dbReference>
<dbReference type="InterPro" id="IPR004087">
    <property type="entry name" value="KH_dom"/>
</dbReference>
<dbReference type="InterPro" id="IPR004088">
    <property type="entry name" value="KH_dom_type_1"/>
</dbReference>
<dbReference type="InterPro" id="IPR036612">
    <property type="entry name" value="KH_dom_type_1_sf"/>
</dbReference>
<dbReference type="InterPro" id="IPR012340">
    <property type="entry name" value="NA-bd_OB-fold"/>
</dbReference>
<dbReference type="InterPro" id="IPR012162">
    <property type="entry name" value="PNPase"/>
</dbReference>
<dbReference type="InterPro" id="IPR027408">
    <property type="entry name" value="PNPase/RNase_PH_dom_sf"/>
</dbReference>
<dbReference type="InterPro" id="IPR015848">
    <property type="entry name" value="PNPase_PH_RNA-bd_bac/org-type"/>
</dbReference>
<dbReference type="InterPro" id="IPR020568">
    <property type="entry name" value="Ribosomal_Su5_D2-typ_SF"/>
</dbReference>
<dbReference type="InterPro" id="IPR003029">
    <property type="entry name" value="S1_domain"/>
</dbReference>
<dbReference type="NCBIfam" id="NF008805">
    <property type="entry name" value="PRK11824.1"/>
    <property type="match status" value="1"/>
</dbReference>
<dbReference type="PANTHER" id="PTHR11252">
    <property type="entry name" value="POLYRIBONUCLEOTIDE NUCLEOTIDYLTRANSFERASE"/>
    <property type="match status" value="1"/>
</dbReference>
<dbReference type="PANTHER" id="PTHR11252:SF0">
    <property type="entry name" value="POLYRIBONUCLEOTIDE NUCLEOTIDYLTRANSFERASE 1, MITOCHONDRIAL"/>
    <property type="match status" value="1"/>
</dbReference>
<dbReference type="Pfam" id="PF00013">
    <property type="entry name" value="KH_1"/>
    <property type="match status" value="1"/>
</dbReference>
<dbReference type="Pfam" id="PF03726">
    <property type="entry name" value="PNPase"/>
    <property type="match status" value="1"/>
</dbReference>
<dbReference type="Pfam" id="PF01138">
    <property type="entry name" value="RNase_PH"/>
    <property type="match status" value="2"/>
</dbReference>
<dbReference type="Pfam" id="PF03725">
    <property type="entry name" value="RNase_PH_C"/>
    <property type="match status" value="2"/>
</dbReference>
<dbReference type="Pfam" id="PF00575">
    <property type="entry name" value="S1"/>
    <property type="match status" value="1"/>
</dbReference>
<dbReference type="PIRSF" id="PIRSF005499">
    <property type="entry name" value="PNPase"/>
    <property type="match status" value="1"/>
</dbReference>
<dbReference type="SMART" id="SM00322">
    <property type="entry name" value="KH"/>
    <property type="match status" value="1"/>
</dbReference>
<dbReference type="SMART" id="SM00316">
    <property type="entry name" value="S1"/>
    <property type="match status" value="1"/>
</dbReference>
<dbReference type="SUPFAM" id="SSF54791">
    <property type="entry name" value="Eukaryotic type KH-domain (KH-domain type I)"/>
    <property type="match status" value="1"/>
</dbReference>
<dbReference type="SUPFAM" id="SSF50249">
    <property type="entry name" value="Nucleic acid-binding proteins"/>
    <property type="match status" value="1"/>
</dbReference>
<dbReference type="SUPFAM" id="SSF55666">
    <property type="entry name" value="Ribonuclease PH domain 2-like"/>
    <property type="match status" value="2"/>
</dbReference>
<dbReference type="SUPFAM" id="SSF54211">
    <property type="entry name" value="Ribosomal protein S5 domain 2-like"/>
    <property type="match status" value="2"/>
</dbReference>
<dbReference type="PROSITE" id="PS50084">
    <property type="entry name" value="KH_TYPE_1"/>
    <property type="match status" value="1"/>
</dbReference>
<dbReference type="PROSITE" id="PS50126">
    <property type="entry name" value="S1"/>
    <property type="match status" value="1"/>
</dbReference>
<evidence type="ECO:0000255" key="1">
    <source>
        <dbReference type="HAMAP-Rule" id="MF_01595"/>
    </source>
</evidence>